<feature type="chain" id="PRO_1000001018" description="Dihydroxy-acid dehydratase">
    <location>
        <begin position="1"/>
        <end position="613"/>
    </location>
</feature>
<feature type="active site" description="Proton acceptor" evidence="1">
    <location>
        <position position="517"/>
    </location>
</feature>
<feature type="binding site" evidence="1">
    <location>
        <position position="81"/>
    </location>
    <ligand>
        <name>Mg(2+)</name>
        <dbReference type="ChEBI" id="CHEBI:18420"/>
    </ligand>
</feature>
<feature type="binding site" evidence="1">
    <location>
        <position position="122"/>
    </location>
    <ligand>
        <name>[2Fe-2S] cluster</name>
        <dbReference type="ChEBI" id="CHEBI:190135"/>
    </ligand>
</feature>
<feature type="binding site" evidence="1">
    <location>
        <position position="123"/>
    </location>
    <ligand>
        <name>Mg(2+)</name>
        <dbReference type="ChEBI" id="CHEBI:18420"/>
    </ligand>
</feature>
<feature type="binding site" description="via carbamate group" evidence="1">
    <location>
        <position position="124"/>
    </location>
    <ligand>
        <name>Mg(2+)</name>
        <dbReference type="ChEBI" id="CHEBI:18420"/>
    </ligand>
</feature>
<feature type="binding site" evidence="1">
    <location>
        <position position="195"/>
    </location>
    <ligand>
        <name>[2Fe-2S] cluster</name>
        <dbReference type="ChEBI" id="CHEBI:190135"/>
    </ligand>
</feature>
<feature type="binding site" evidence="1">
    <location>
        <position position="491"/>
    </location>
    <ligand>
        <name>Mg(2+)</name>
        <dbReference type="ChEBI" id="CHEBI:18420"/>
    </ligand>
</feature>
<feature type="modified residue" description="N6-carboxylysine" evidence="1">
    <location>
        <position position="124"/>
    </location>
</feature>
<sequence length="613" mass="65393">MPAYRSRTSTHGRNMAGARGLWRATGMKNEDFGKPIIAVVNSFTQFVPGHVHLKDLGQLVAREIEKAGGVAKEFNTIAVDDGIAMGHDGMLYSLPSREIIADSVEYMVNAHCADAMVCISNCDKITPGMLMAALRLNVPAVFVSGGPMESGKVNVNGKIRSVDLIDAMVAAADDSVSDADVEAIERSACPTCGSCSGMFTANSMNCLTEALGLALPGNGSVLATHADRKGLFVEAGHLIVDLARRYYEQDDARVLPRAIASFKAFENAMTLDISMGGSTNTVLHLLAAAYEGEVPFTMKDIDRLSRRVPVLCKVAPSVVDVHLEDVHRAGGIMGILGELDRAGLIDSSLPTVHSTSLKDGLERWDIKRTKSDSVRSFYLAAPGGVRTQVAFSQDKRFEELDADRSSGCIRDAEHAFSKDGGLAVLYGNIARDGCIVKTAGVDDSILTFSGPARIFESQDAAVDAILTNRIQPGDVVLIRYEGPRGGPGMQEMLYPTSYLKSKGLGKQCALITDGRFSGGSSGLSIGHVSPEAAEGGAIGLVEEGDRIVFDIPNRKVHLDVSDAELERRRAAMEAKGDKAWKPAPRKRRVTMALKAYAAHATSAALGAVRVVKD</sequence>
<accession>Q1QRS7</accession>
<organism>
    <name type="scientific">Nitrobacter hamburgensis (strain DSM 10229 / NCIMB 13809 / X14)</name>
    <dbReference type="NCBI Taxonomy" id="323097"/>
    <lineage>
        <taxon>Bacteria</taxon>
        <taxon>Pseudomonadati</taxon>
        <taxon>Pseudomonadota</taxon>
        <taxon>Alphaproteobacteria</taxon>
        <taxon>Hyphomicrobiales</taxon>
        <taxon>Nitrobacteraceae</taxon>
        <taxon>Nitrobacter</taxon>
    </lineage>
</organism>
<dbReference type="EC" id="4.2.1.9" evidence="1"/>
<dbReference type="EMBL" id="CP000319">
    <property type="protein sequence ID" value="ABE61070.1"/>
    <property type="molecule type" value="Genomic_DNA"/>
</dbReference>
<dbReference type="RefSeq" id="WP_011508776.1">
    <property type="nucleotide sequence ID" value="NC_007964.1"/>
</dbReference>
<dbReference type="SMR" id="Q1QRS7"/>
<dbReference type="STRING" id="323097.Nham_0169"/>
<dbReference type="KEGG" id="nha:Nham_0169"/>
<dbReference type="eggNOG" id="COG0129">
    <property type="taxonomic scope" value="Bacteria"/>
</dbReference>
<dbReference type="HOGENOM" id="CLU_014271_4_3_5"/>
<dbReference type="OrthoDB" id="7793094at2"/>
<dbReference type="UniPathway" id="UPA00047">
    <property type="reaction ID" value="UER00057"/>
</dbReference>
<dbReference type="UniPathway" id="UPA00049">
    <property type="reaction ID" value="UER00061"/>
</dbReference>
<dbReference type="Proteomes" id="UP000001953">
    <property type="component" value="Chromosome"/>
</dbReference>
<dbReference type="GO" id="GO:0005829">
    <property type="term" value="C:cytosol"/>
    <property type="evidence" value="ECO:0007669"/>
    <property type="project" value="TreeGrafter"/>
</dbReference>
<dbReference type="GO" id="GO:0051537">
    <property type="term" value="F:2 iron, 2 sulfur cluster binding"/>
    <property type="evidence" value="ECO:0007669"/>
    <property type="project" value="UniProtKB-UniRule"/>
</dbReference>
<dbReference type="GO" id="GO:0004160">
    <property type="term" value="F:dihydroxy-acid dehydratase activity"/>
    <property type="evidence" value="ECO:0007669"/>
    <property type="project" value="UniProtKB-UniRule"/>
</dbReference>
<dbReference type="GO" id="GO:0000287">
    <property type="term" value="F:magnesium ion binding"/>
    <property type="evidence" value="ECO:0007669"/>
    <property type="project" value="UniProtKB-UniRule"/>
</dbReference>
<dbReference type="GO" id="GO:0009097">
    <property type="term" value="P:isoleucine biosynthetic process"/>
    <property type="evidence" value="ECO:0007669"/>
    <property type="project" value="UniProtKB-UniRule"/>
</dbReference>
<dbReference type="GO" id="GO:0009099">
    <property type="term" value="P:L-valine biosynthetic process"/>
    <property type="evidence" value="ECO:0007669"/>
    <property type="project" value="UniProtKB-UniRule"/>
</dbReference>
<dbReference type="FunFam" id="3.50.30.80:FF:000001">
    <property type="entry name" value="Dihydroxy-acid dehydratase"/>
    <property type="match status" value="1"/>
</dbReference>
<dbReference type="Gene3D" id="3.50.30.80">
    <property type="entry name" value="IlvD/EDD C-terminal domain-like"/>
    <property type="match status" value="1"/>
</dbReference>
<dbReference type="HAMAP" id="MF_00012">
    <property type="entry name" value="IlvD"/>
    <property type="match status" value="1"/>
</dbReference>
<dbReference type="InterPro" id="IPR042096">
    <property type="entry name" value="Dihydro-acid_dehy_C"/>
</dbReference>
<dbReference type="InterPro" id="IPR004404">
    <property type="entry name" value="DihydroxyA_deHydtase"/>
</dbReference>
<dbReference type="InterPro" id="IPR020558">
    <property type="entry name" value="DiOHA_6PGluconate_deHydtase_CS"/>
</dbReference>
<dbReference type="InterPro" id="IPR056740">
    <property type="entry name" value="ILV_EDD_C"/>
</dbReference>
<dbReference type="InterPro" id="IPR000581">
    <property type="entry name" value="ILV_EDD_N"/>
</dbReference>
<dbReference type="InterPro" id="IPR037237">
    <property type="entry name" value="IlvD/EDD_N"/>
</dbReference>
<dbReference type="NCBIfam" id="TIGR00110">
    <property type="entry name" value="ilvD"/>
    <property type="match status" value="1"/>
</dbReference>
<dbReference type="NCBIfam" id="NF009103">
    <property type="entry name" value="PRK12448.1"/>
    <property type="match status" value="1"/>
</dbReference>
<dbReference type="PANTHER" id="PTHR43661">
    <property type="entry name" value="D-XYLONATE DEHYDRATASE"/>
    <property type="match status" value="1"/>
</dbReference>
<dbReference type="PANTHER" id="PTHR43661:SF3">
    <property type="entry name" value="D-XYLONATE DEHYDRATASE YAGF-RELATED"/>
    <property type="match status" value="1"/>
</dbReference>
<dbReference type="Pfam" id="PF24877">
    <property type="entry name" value="ILV_EDD_C"/>
    <property type="match status" value="1"/>
</dbReference>
<dbReference type="Pfam" id="PF00920">
    <property type="entry name" value="ILVD_EDD_N"/>
    <property type="match status" value="1"/>
</dbReference>
<dbReference type="SUPFAM" id="SSF143975">
    <property type="entry name" value="IlvD/EDD N-terminal domain-like"/>
    <property type="match status" value="1"/>
</dbReference>
<dbReference type="SUPFAM" id="SSF52016">
    <property type="entry name" value="LeuD/IlvD-like"/>
    <property type="match status" value="1"/>
</dbReference>
<dbReference type="PROSITE" id="PS00886">
    <property type="entry name" value="ILVD_EDD_1"/>
    <property type="match status" value="1"/>
</dbReference>
<dbReference type="PROSITE" id="PS00887">
    <property type="entry name" value="ILVD_EDD_2"/>
    <property type="match status" value="1"/>
</dbReference>
<reference key="1">
    <citation type="submission" date="2006-03" db="EMBL/GenBank/DDBJ databases">
        <title>Complete sequence of chromosome of Nitrobacter hamburgensis X14.</title>
        <authorList>
            <consortium name="US DOE Joint Genome Institute"/>
            <person name="Copeland A."/>
            <person name="Lucas S."/>
            <person name="Lapidus A."/>
            <person name="Barry K."/>
            <person name="Detter J.C."/>
            <person name="Glavina del Rio T."/>
            <person name="Hammon N."/>
            <person name="Israni S."/>
            <person name="Dalin E."/>
            <person name="Tice H."/>
            <person name="Pitluck S."/>
            <person name="Chain P."/>
            <person name="Malfatti S."/>
            <person name="Shin M."/>
            <person name="Vergez L."/>
            <person name="Schmutz J."/>
            <person name="Larimer F."/>
            <person name="Land M."/>
            <person name="Hauser L."/>
            <person name="Kyrpides N."/>
            <person name="Ivanova N."/>
            <person name="Ward B."/>
            <person name="Arp D."/>
            <person name="Klotz M."/>
            <person name="Stein L."/>
            <person name="O'Mullan G."/>
            <person name="Starkenburg S."/>
            <person name="Sayavedra L."/>
            <person name="Poret-Peterson A.T."/>
            <person name="Gentry M.E."/>
            <person name="Bruce D."/>
            <person name="Richardson P."/>
        </authorList>
    </citation>
    <scope>NUCLEOTIDE SEQUENCE [LARGE SCALE GENOMIC DNA]</scope>
    <source>
        <strain>DSM 10229 / NCIMB 13809 / X14</strain>
    </source>
</reference>
<proteinExistence type="inferred from homology"/>
<name>ILVD_NITHX</name>
<protein>
    <recommendedName>
        <fullName evidence="1">Dihydroxy-acid dehydratase</fullName>
        <shortName evidence="1">DAD</shortName>
        <ecNumber evidence="1">4.2.1.9</ecNumber>
    </recommendedName>
</protein>
<evidence type="ECO:0000255" key="1">
    <source>
        <dbReference type="HAMAP-Rule" id="MF_00012"/>
    </source>
</evidence>
<comment type="function">
    <text evidence="1">Functions in the biosynthesis of branched-chain amino acids. Catalyzes the dehydration of (2R,3R)-2,3-dihydroxy-3-methylpentanoate (2,3-dihydroxy-3-methylvalerate) into 2-oxo-3-methylpentanoate (2-oxo-3-methylvalerate) and of (2R)-2,3-dihydroxy-3-methylbutanoate (2,3-dihydroxyisovalerate) into 2-oxo-3-methylbutanoate (2-oxoisovalerate), the penultimate precursor to L-isoleucine and L-valine, respectively.</text>
</comment>
<comment type="catalytic activity">
    <reaction evidence="1">
        <text>(2R)-2,3-dihydroxy-3-methylbutanoate = 3-methyl-2-oxobutanoate + H2O</text>
        <dbReference type="Rhea" id="RHEA:24809"/>
        <dbReference type="ChEBI" id="CHEBI:11851"/>
        <dbReference type="ChEBI" id="CHEBI:15377"/>
        <dbReference type="ChEBI" id="CHEBI:49072"/>
        <dbReference type="EC" id="4.2.1.9"/>
    </reaction>
    <physiologicalReaction direction="left-to-right" evidence="1">
        <dbReference type="Rhea" id="RHEA:24810"/>
    </physiologicalReaction>
</comment>
<comment type="catalytic activity">
    <reaction evidence="1">
        <text>(2R,3R)-2,3-dihydroxy-3-methylpentanoate = (S)-3-methyl-2-oxopentanoate + H2O</text>
        <dbReference type="Rhea" id="RHEA:27694"/>
        <dbReference type="ChEBI" id="CHEBI:15377"/>
        <dbReference type="ChEBI" id="CHEBI:35146"/>
        <dbReference type="ChEBI" id="CHEBI:49258"/>
        <dbReference type="EC" id="4.2.1.9"/>
    </reaction>
    <physiologicalReaction direction="left-to-right" evidence="1">
        <dbReference type="Rhea" id="RHEA:27695"/>
    </physiologicalReaction>
</comment>
<comment type="cofactor">
    <cofactor evidence="1">
        <name>[2Fe-2S] cluster</name>
        <dbReference type="ChEBI" id="CHEBI:190135"/>
    </cofactor>
    <text evidence="1">Binds 1 [2Fe-2S] cluster per subunit. This cluster acts as a Lewis acid cofactor.</text>
</comment>
<comment type="cofactor">
    <cofactor evidence="1">
        <name>Mg(2+)</name>
        <dbReference type="ChEBI" id="CHEBI:18420"/>
    </cofactor>
</comment>
<comment type="pathway">
    <text evidence="1">Amino-acid biosynthesis; L-isoleucine biosynthesis; L-isoleucine from 2-oxobutanoate: step 3/4.</text>
</comment>
<comment type="pathway">
    <text evidence="1">Amino-acid biosynthesis; L-valine biosynthesis; L-valine from pyruvate: step 3/4.</text>
</comment>
<comment type="subunit">
    <text evidence="1">Homodimer.</text>
</comment>
<comment type="similarity">
    <text evidence="1">Belongs to the IlvD/Edd family.</text>
</comment>
<keyword id="KW-0001">2Fe-2S</keyword>
<keyword id="KW-0028">Amino-acid biosynthesis</keyword>
<keyword id="KW-0100">Branched-chain amino acid biosynthesis</keyword>
<keyword id="KW-0408">Iron</keyword>
<keyword id="KW-0411">Iron-sulfur</keyword>
<keyword id="KW-0456">Lyase</keyword>
<keyword id="KW-0460">Magnesium</keyword>
<keyword id="KW-0479">Metal-binding</keyword>
<keyword id="KW-1185">Reference proteome</keyword>
<gene>
    <name evidence="1" type="primary">ilvD</name>
    <name type="ordered locus">Nham_0169</name>
</gene>